<protein>
    <recommendedName>
        <fullName evidence="2">Ornithine carbamoyltransferase</fullName>
        <shortName evidence="2">OTCase</shortName>
        <ecNumber evidence="2">2.1.3.3</ecNumber>
    </recommendedName>
</protein>
<name>OTC_BACC3</name>
<gene>
    <name evidence="2" type="primary">arcB</name>
    <name type="ordered locus">BCA_4241</name>
</gene>
<sequence length="316" mass="35326">MSTVQVPKLNTKDLLTLEELTQEEIISLIEFAIYLKKNKQEPLLQGKILGLIFDKHSTRTRVSFEAGMVQLGGHGMFLNGKEMQMGRGETVSDTAKVLSHYIDGIMIRTFSHADVEELAKESSIPVINGLTDDHHPCQALADLMTIYEETNTFKGIKLAYVGDGNNVCHSLLLASAKVGMHMTVATPIGYEPNEEIVKKALAIAKETGAEIEILHNPELAVNEVDFIYTDVWMSMGQEGEEEKYTVFQPYQINKELVTHAKQTYRFLHCLPAHREEEVTGEIIDGPQSIVFEQAGNRLHAQKALLVSLFKNVEELS</sequence>
<proteinExistence type="inferred from homology"/>
<evidence type="ECO:0000250" key="1"/>
<evidence type="ECO:0000255" key="2">
    <source>
        <dbReference type="HAMAP-Rule" id="MF_01109"/>
    </source>
</evidence>
<feature type="chain" id="PRO_1000163959" description="Ornithine carbamoyltransferase">
    <location>
        <begin position="1"/>
        <end position="316"/>
    </location>
</feature>
<feature type="binding site" evidence="2">
    <location>
        <begin position="57"/>
        <end position="60"/>
    </location>
    <ligand>
        <name>carbamoyl phosphate</name>
        <dbReference type="ChEBI" id="CHEBI:58228"/>
    </ligand>
</feature>
<feature type="binding site" evidence="2">
    <location>
        <position position="84"/>
    </location>
    <ligand>
        <name>carbamoyl phosphate</name>
        <dbReference type="ChEBI" id="CHEBI:58228"/>
    </ligand>
</feature>
<feature type="binding site" evidence="2">
    <location>
        <position position="108"/>
    </location>
    <ligand>
        <name>carbamoyl phosphate</name>
        <dbReference type="ChEBI" id="CHEBI:58228"/>
    </ligand>
</feature>
<feature type="binding site" evidence="2">
    <location>
        <begin position="135"/>
        <end position="138"/>
    </location>
    <ligand>
        <name>carbamoyl phosphate</name>
        <dbReference type="ChEBI" id="CHEBI:58228"/>
    </ligand>
</feature>
<feature type="binding site" evidence="2">
    <location>
        <position position="166"/>
    </location>
    <ligand>
        <name>L-ornithine</name>
        <dbReference type="ChEBI" id="CHEBI:46911"/>
    </ligand>
</feature>
<feature type="binding site" evidence="2">
    <location>
        <position position="230"/>
    </location>
    <ligand>
        <name>L-ornithine</name>
        <dbReference type="ChEBI" id="CHEBI:46911"/>
    </ligand>
</feature>
<feature type="binding site" evidence="2">
    <location>
        <begin position="234"/>
        <end position="235"/>
    </location>
    <ligand>
        <name>L-ornithine</name>
        <dbReference type="ChEBI" id="CHEBI:46911"/>
    </ligand>
</feature>
<feature type="binding site" evidence="2">
    <location>
        <begin position="269"/>
        <end position="270"/>
    </location>
    <ligand>
        <name>carbamoyl phosphate</name>
        <dbReference type="ChEBI" id="CHEBI:58228"/>
    </ligand>
</feature>
<feature type="binding site" evidence="2">
    <location>
        <position position="297"/>
    </location>
    <ligand>
        <name>carbamoyl phosphate</name>
        <dbReference type="ChEBI" id="CHEBI:58228"/>
    </ligand>
</feature>
<comment type="function">
    <text evidence="1">Reversibly catalyzes the transfer of the carbamoyl group from carbamoyl phosphate (CP) to the N(epsilon) atom of ornithine (ORN) to produce L-citrulline.</text>
</comment>
<comment type="catalytic activity">
    <reaction evidence="2">
        <text>carbamoyl phosphate + L-ornithine = L-citrulline + phosphate + H(+)</text>
        <dbReference type="Rhea" id="RHEA:19513"/>
        <dbReference type="ChEBI" id="CHEBI:15378"/>
        <dbReference type="ChEBI" id="CHEBI:43474"/>
        <dbReference type="ChEBI" id="CHEBI:46911"/>
        <dbReference type="ChEBI" id="CHEBI:57743"/>
        <dbReference type="ChEBI" id="CHEBI:58228"/>
        <dbReference type="EC" id="2.1.3.3"/>
    </reaction>
</comment>
<comment type="pathway">
    <text evidence="2">Amino-acid degradation; L-arginine degradation via ADI pathway; carbamoyl phosphate from L-arginine: step 2/2.</text>
</comment>
<comment type="subcellular location">
    <subcellularLocation>
        <location evidence="2">Cytoplasm</location>
    </subcellularLocation>
</comment>
<comment type="similarity">
    <text evidence="2">Belongs to the aspartate/ornithine carbamoyltransferase superfamily. OTCase family.</text>
</comment>
<reference key="1">
    <citation type="submission" date="2009-02" db="EMBL/GenBank/DDBJ databases">
        <title>Genome sequence of Bacillus cereus 03BB102.</title>
        <authorList>
            <person name="Dodson R.J."/>
            <person name="Jackson P."/>
            <person name="Munk A.C."/>
            <person name="Brettin T."/>
            <person name="Bruce D."/>
            <person name="Detter C."/>
            <person name="Tapia R."/>
            <person name="Han C."/>
            <person name="Sutton G."/>
            <person name="Sims D."/>
        </authorList>
    </citation>
    <scope>NUCLEOTIDE SEQUENCE [LARGE SCALE GENOMIC DNA]</scope>
    <source>
        <strain>03BB102</strain>
    </source>
</reference>
<dbReference type="EC" id="2.1.3.3" evidence="2"/>
<dbReference type="EMBL" id="CP001407">
    <property type="protein sequence ID" value="ACO27846.1"/>
    <property type="molecule type" value="Genomic_DNA"/>
</dbReference>
<dbReference type="SMR" id="C1ER02"/>
<dbReference type="KEGG" id="bcx:BCA_4241"/>
<dbReference type="PATRIC" id="fig|572264.18.peg.4192"/>
<dbReference type="UniPathway" id="UPA00254">
    <property type="reaction ID" value="UER00365"/>
</dbReference>
<dbReference type="Proteomes" id="UP000002210">
    <property type="component" value="Chromosome"/>
</dbReference>
<dbReference type="GO" id="GO:0005737">
    <property type="term" value="C:cytoplasm"/>
    <property type="evidence" value="ECO:0007669"/>
    <property type="project" value="UniProtKB-SubCell"/>
</dbReference>
<dbReference type="GO" id="GO:0016597">
    <property type="term" value="F:amino acid binding"/>
    <property type="evidence" value="ECO:0007669"/>
    <property type="project" value="InterPro"/>
</dbReference>
<dbReference type="GO" id="GO:0004585">
    <property type="term" value="F:ornithine carbamoyltransferase activity"/>
    <property type="evidence" value="ECO:0007669"/>
    <property type="project" value="UniProtKB-UniRule"/>
</dbReference>
<dbReference type="GO" id="GO:0042450">
    <property type="term" value="P:arginine biosynthetic process via ornithine"/>
    <property type="evidence" value="ECO:0007669"/>
    <property type="project" value="TreeGrafter"/>
</dbReference>
<dbReference type="GO" id="GO:0019547">
    <property type="term" value="P:arginine catabolic process to ornithine"/>
    <property type="evidence" value="ECO:0007669"/>
    <property type="project" value="UniProtKB-UniRule"/>
</dbReference>
<dbReference type="GO" id="GO:0019240">
    <property type="term" value="P:citrulline biosynthetic process"/>
    <property type="evidence" value="ECO:0007669"/>
    <property type="project" value="TreeGrafter"/>
</dbReference>
<dbReference type="FunFam" id="3.40.50.1370:FF:000008">
    <property type="entry name" value="Ornithine carbamoyltransferase"/>
    <property type="match status" value="1"/>
</dbReference>
<dbReference type="FunFam" id="3.40.50.1370:FF:000016">
    <property type="entry name" value="Ornithine carbamoyltransferase"/>
    <property type="match status" value="1"/>
</dbReference>
<dbReference type="Gene3D" id="3.40.50.1370">
    <property type="entry name" value="Aspartate/ornithine carbamoyltransferase"/>
    <property type="match status" value="2"/>
</dbReference>
<dbReference type="HAMAP" id="MF_01109">
    <property type="entry name" value="OTCase"/>
    <property type="match status" value="1"/>
</dbReference>
<dbReference type="InterPro" id="IPR006132">
    <property type="entry name" value="Asp/Orn_carbamoyltranf_P-bd"/>
</dbReference>
<dbReference type="InterPro" id="IPR006130">
    <property type="entry name" value="Asp/Orn_carbamoylTrfase"/>
</dbReference>
<dbReference type="InterPro" id="IPR036901">
    <property type="entry name" value="Asp/Orn_carbamoylTrfase_sf"/>
</dbReference>
<dbReference type="InterPro" id="IPR006131">
    <property type="entry name" value="Asp_carbamoyltransf_Asp/Orn-bd"/>
</dbReference>
<dbReference type="InterPro" id="IPR002292">
    <property type="entry name" value="Orn/put_carbamltrans"/>
</dbReference>
<dbReference type="InterPro" id="IPR024904">
    <property type="entry name" value="OTCase_ArgI"/>
</dbReference>
<dbReference type="NCBIfam" id="TIGR00658">
    <property type="entry name" value="orni_carb_tr"/>
    <property type="match status" value="1"/>
</dbReference>
<dbReference type="NCBIfam" id="NF001986">
    <property type="entry name" value="PRK00779.1"/>
    <property type="match status" value="1"/>
</dbReference>
<dbReference type="PANTHER" id="PTHR45753">
    <property type="entry name" value="ORNITHINE CARBAMOYLTRANSFERASE, MITOCHONDRIAL"/>
    <property type="match status" value="1"/>
</dbReference>
<dbReference type="PANTHER" id="PTHR45753:SF3">
    <property type="entry name" value="ORNITHINE TRANSCARBAMYLASE, MITOCHONDRIAL"/>
    <property type="match status" value="1"/>
</dbReference>
<dbReference type="Pfam" id="PF00185">
    <property type="entry name" value="OTCace"/>
    <property type="match status" value="1"/>
</dbReference>
<dbReference type="Pfam" id="PF02729">
    <property type="entry name" value="OTCace_N"/>
    <property type="match status" value="1"/>
</dbReference>
<dbReference type="PRINTS" id="PR00100">
    <property type="entry name" value="AOTCASE"/>
</dbReference>
<dbReference type="PRINTS" id="PR00102">
    <property type="entry name" value="OTCASE"/>
</dbReference>
<dbReference type="SUPFAM" id="SSF53671">
    <property type="entry name" value="Aspartate/ornithine carbamoyltransferase"/>
    <property type="match status" value="1"/>
</dbReference>
<dbReference type="PROSITE" id="PS00097">
    <property type="entry name" value="CARBAMOYLTRANSFERASE"/>
    <property type="match status" value="1"/>
</dbReference>
<organism>
    <name type="scientific">Bacillus cereus (strain 03BB102)</name>
    <dbReference type="NCBI Taxonomy" id="572264"/>
    <lineage>
        <taxon>Bacteria</taxon>
        <taxon>Bacillati</taxon>
        <taxon>Bacillota</taxon>
        <taxon>Bacilli</taxon>
        <taxon>Bacillales</taxon>
        <taxon>Bacillaceae</taxon>
        <taxon>Bacillus</taxon>
        <taxon>Bacillus cereus group</taxon>
    </lineage>
</organism>
<accession>C1ER02</accession>
<keyword id="KW-0056">Arginine metabolism</keyword>
<keyword id="KW-0963">Cytoplasm</keyword>
<keyword id="KW-0808">Transferase</keyword>